<reference key="1">
    <citation type="journal article" date="2009" name="J. Bacteriol.">
        <title>Genomic sequencing reveals regulatory mutations and recombinational events in the widely used MC4100 lineage of Escherichia coli K-12.</title>
        <authorList>
            <person name="Ferenci T."/>
            <person name="Zhou Z."/>
            <person name="Betteridge T."/>
            <person name="Ren Y."/>
            <person name="Liu Y."/>
            <person name="Feng L."/>
            <person name="Reeves P.R."/>
            <person name="Wang L."/>
        </authorList>
    </citation>
    <scope>NUCLEOTIDE SEQUENCE [LARGE SCALE GENOMIC DNA]</scope>
    <source>
        <strain>K12 / MC4100 / BW2952</strain>
    </source>
</reference>
<keyword id="KW-0004">4Fe-4S</keyword>
<keyword id="KW-0408">Iron</keyword>
<keyword id="KW-0411">Iron-sulfur</keyword>
<keyword id="KW-0479">Metal-binding</keyword>
<name>NFUA_ECOBW</name>
<protein>
    <recommendedName>
        <fullName evidence="1">Fe/S biogenesis protein NfuA</fullName>
    </recommendedName>
</protein>
<comment type="function">
    <text evidence="1">Involved in iron-sulfur cluster biogenesis. Binds a 4Fe-4S cluster, can transfer this cluster to apoproteins, and thereby intervenes in the maturation of Fe/S proteins. Could also act as a scaffold/chaperone for damaged Fe/S proteins.</text>
</comment>
<comment type="cofactor">
    <cofactor evidence="1">
        <name>[4Fe-4S] cluster</name>
        <dbReference type="ChEBI" id="CHEBI:49883"/>
    </cofactor>
    <text evidence="1">Binds 1 [4Fe-4S] cluster per subunit. The cluster is presumably bound at the interface of two monomers.</text>
</comment>
<comment type="subunit">
    <text evidence="1">Homodimer.</text>
</comment>
<comment type="similarity">
    <text evidence="1">Belongs to the NfuA family.</text>
</comment>
<proteinExistence type="inferred from homology"/>
<gene>
    <name evidence="1" type="primary">nfuA</name>
    <name type="ordered locus">BWG_3105</name>
</gene>
<organism>
    <name type="scientific">Escherichia coli (strain K12 / MC4100 / BW2952)</name>
    <dbReference type="NCBI Taxonomy" id="595496"/>
    <lineage>
        <taxon>Bacteria</taxon>
        <taxon>Pseudomonadati</taxon>
        <taxon>Pseudomonadota</taxon>
        <taxon>Gammaproteobacteria</taxon>
        <taxon>Enterobacterales</taxon>
        <taxon>Enterobacteriaceae</taxon>
        <taxon>Escherichia</taxon>
    </lineage>
</organism>
<accession>C4ZVW3</accession>
<dbReference type="EMBL" id="CP001396">
    <property type="protein sequence ID" value="ACR64426.1"/>
    <property type="molecule type" value="Genomic_DNA"/>
</dbReference>
<dbReference type="RefSeq" id="WP_000619389.1">
    <property type="nucleotide sequence ID" value="NC_012759.1"/>
</dbReference>
<dbReference type="SMR" id="C4ZVW3"/>
<dbReference type="GeneID" id="93778582"/>
<dbReference type="KEGG" id="ebw:BWG_3105"/>
<dbReference type="HOGENOM" id="CLU_094569_0_0_6"/>
<dbReference type="GO" id="GO:0051539">
    <property type="term" value="F:4 iron, 4 sulfur cluster binding"/>
    <property type="evidence" value="ECO:0007669"/>
    <property type="project" value="UniProtKB-UniRule"/>
</dbReference>
<dbReference type="GO" id="GO:0005506">
    <property type="term" value="F:iron ion binding"/>
    <property type="evidence" value="ECO:0007669"/>
    <property type="project" value="InterPro"/>
</dbReference>
<dbReference type="GO" id="GO:0016226">
    <property type="term" value="P:iron-sulfur cluster assembly"/>
    <property type="evidence" value="ECO:0007669"/>
    <property type="project" value="UniProtKB-UniRule"/>
</dbReference>
<dbReference type="GO" id="GO:0051604">
    <property type="term" value="P:protein maturation"/>
    <property type="evidence" value="ECO:0007669"/>
    <property type="project" value="UniProtKB-UniRule"/>
</dbReference>
<dbReference type="FunFam" id="2.60.300.12:FF:000004">
    <property type="entry name" value="Fe/S biogenesis protein NfuA"/>
    <property type="match status" value="1"/>
</dbReference>
<dbReference type="FunFam" id="3.30.300.130:FF:000002">
    <property type="entry name" value="Fe/S biogenesis protein NfuA"/>
    <property type="match status" value="1"/>
</dbReference>
<dbReference type="Gene3D" id="3.30.300.130">
    <property type="entry name" value="Fe-S cluster assembly (FSCA)"/>
    <property type="match status" value="1"/>
</dbReference>
<dbReference type="Gene3D" id="2.60.300.12">
    <property type="entry name" value="HesB-like domain"/>
    <property type="match status" value="1"/>
</dbReference>
<dbReference type="HAMAP" id="MF_01637">
    <property type="entry name" value="Fe_S_biogen_NfuA"/>
    <property type="match status" value="1"/>
</dbReference>
<dbReference type="InterPro" id="IPR017726">
    <property type="entry name" value="Fe/S_biogenesis_protein_NfuA"/>
</dbReference>
<dbReference type="InterPro" id="IPR000361">
    <property type="entry name" value="FeS_biogenesis"/>
</dbReference>
<dbReference type="InterPro" id="IPR034904">
    <property type="entry name" value="FSCA_dom_sf"/>
</dbReference>
<dbReference type="InterPro" id="IPR035903">
    <property type="entry name" value="HesB-like_dom_sf"/>
</dbReference>
<dbReference type="InterPro" id="IPR001075">
    <property type="entry name" value="NIF_FeS_clus_asmbl_NifU_C"/>
</dbReference>
<dbReference type="NCBIfam" id="NF008392">
    <property type="entry name" value="PRK11190.1"/>
    <property type="match status" value="1"/>
</dbReference>
<dbReference type="NCBIfam" id="TIGR03341">
    <property type="entry name" value="YhgI_GntY"/>
    <property type="match status" value="1"/>
</dbReference>
<dbReference type="PANTHER" id="PTHR11178:SF51">
    <property type="entry name" value="FE_S BIOGENESIS PROTEIN NFUA"/>
    <property type="match status" value="1"/>
</dbReference>
<dbReference type="PANTHER" id="PTHR11178">
    <property type="entry name" value="IRON-SULFUR CLUSTER SCAFFOLD PROTEIN NFU-RELATED"/>
    <property type="match status" value="1"/>
</dbReference>
<dbReference type="Pfam" id="PF01521">
    <property type="entry name" value="Fe-S_biosyn"/>
    <property type="match status" value="1"/>
</dbReference>
<dbReference type="Pfam" id="PF01106">
    <property type="entry name" value="NifU"/>
    <property type="match status" value="1"/>
</dbReference>
<dbReference type="SUPFAM" id="SSF117916">
    <property type="entry name" value="Fe-S cluster assembly (FSCA) domain-like"/>
    <property type="match status" value="1"/>
</dbReference>
<dbReference type="SUPFAM" id="SSF89360">
    <property type="entry name" value="HesB-like domain"/>
    <property type="match status" value="1"/>
</dbReference>
<evidence type="ECO:0000255" key="1">
    <source>
        <dbReference type="HAMAP-Rule" id="MF_01637"/>
    </source>
</evidence>
<sequence>MIRISDAAQAHFAKLLANQEEGTQIRVFVINPGTPNAECGVSYCPPDAVEATDTALKFDLLTAYVDELSAPYLEDAEIDFVTDQLGSQLTLKAPNAKMRKVADDAPLMERVEYMLQSQINPQLAGHGGRVSLMEITEDGYAILQFGGGCNGCSMVDVTLKEGIEKQLLNEFPELKGVRDLTEHQRGEHSYY</sequence>
<feature type="chain" id="PRO_1000215813" description="Fe/S biogenesis protein NfuA">
    <location>
        <begin position="1"/>
        <end position="191"/>
    </location>
</feature>
<feature type="binding site" evidence="1">
    <location>
        <position position="149"/>
    </location>
    <ligand>
        <name>[4Fe-4S] cluster</name>
        <dbReference type="ChEBI" id="CHEBI:49883"/>
    </ligand>
</feature>
<feature type="binding site" evidence="1">
    <location>
        <position position="152"/>
    </location>
    <ligand>
        <name>[4Fe-4S] cluster</name>
        <dbReference type="ChEBI" id="CHEBI:49883"/>
    </ligand>
</feature>